<comment type="function">
    <text evidence="2">Catalyzes the reversible phosphorylation of UMP to UDP.</text>
</comment>
<comment type="catalytic activity">
    <reaction evidence="2">
        <text>UMP + ATP = UDP + ADP</text>
        <dbReference type="Rhea" id="RHEA:24400"/>
        <dbReference type="ChEBI" id="CHEBI:30616"/>
        <dbReference type="ChEBI" id="CHEBI:57865"/>
        <dbReference type="ChEBI" id="CHEBI:58223"/>
        <dbReference type="ChEBI" id="CHEBI:456216"/>
        <dbReference type="EC" id="2.7.4.22"/>
    </reaction>
</comment>
<comment type="activity regulation">
    <text evidence="2">Allosterically activated by GTP. Inhibited by UTP.</text>
</comment>
<comment type="pathway">
    <text evidence="2">Pyrimidine metabolism; CTP biosynthesis via de novo pathway; UDP from UMP (UMPK route): step 1/1.</text>
</comment>
<comment type="subunit">
    <text evidence="2">Homohexamer.</text>
</comment>
<comment type="subcellular location">
    <subcellularLocation>
        <location evidence="2">Cytoplasm</location>
    </subcellularLocation>
</comment>
<comment type="similarity">
    <text evidence="2">Belongs to the UMP kinase family.</text>
</comment>
<reference key="1">
    <citation type="journal article" date="2002" name="Proc. Natl. Acad. Sci. U.S.A.">
        <title>Extensive mosaic structure revealed by the complete genome sequence of uropathogenic Escherichia coli.</title>
        <authorList>
            <person name="Welch R.A."/>
            <person name="Burland V."/>
            <person name="Plunkett G. III"/>
            <person name="Redford P."/>
            <person name="Roesch P."/>
            <person name="Rasko D."/>
            <person name="Buckles E.L."/>
            <person name="Liou S.-R."/>
            <person name="Boutin A."/>
            <person name="Hackett J."/>
            <person name="Stroud D."/>
            <person name="Mayhew G.F."/>
            <person name="Rose D.J."/>
            <person name="Zhou S."/>
            <person name="Schwartz D.C."/>
            <person name="Perna N.T."/>
            <person name="Mobley H.L.T."/>
            <person name="Donnenberg M.S."/>
            <person name="Blattner F.R."/>
        </authorList>
    </citation>
    <scope>NUCLEOTIDE SEQUENCE [LARGE SCALE GENOMIC DNA]</scope>
    <source>
        <strain>CFT073 / ATCC 700928 / UPEC</strain>
    </source>
</reference>
<accession>P0A7F0</accession>
<accession>P29464</accession>
<organism>
    <name type="scientific">Escherichia coli O6:H1 (strain CFT073 / ATCC 700928 / UPEC)</name>
    <dbReference type="NCBI Taxonomy" id="199310"/>
    <lineage>
        <taxon>Bacteria</taxon>
        <taxon>Pseudomonadati</taxon>
        <taxon>Pseudomonadota</taxon>
        <taxon>Gammaproteobacteria</taxon>
        <taxon>Enterobacterales</taxon>
        <taxon>Enterobacteriaceae</taxon>
        <taxon>Escherichia</taxon>
    </lineage>
</organism>
<protein>
    <recommendedName>
        <fullName evidence="2">Uridylate kinase</fullName>
        <shortName evidence="2">UK</shortName>
        <ecNumber evidence="2">2.7.4.22</ecNumber>
    </recommendedName>
    <alternativeName>
        <fullName evidence="2">Uridine monophosphate kinase</fullName>
        <shortName evidence="2">UMP kinase</shortName>
        <shortName evidence="2">UMPK</shortName>
    </alternativeName>
</protein>
<gene>
    <name evidence="2" type="primary">pyrH</name>
    <name type="ordered locus">c0207</name>
</gene>
<feature type="initiator methionine" description="Removed" evidence="1">
    <location>
        <position position="1"/>
    </location>
</feature>
<feature type="chain" id="PRO_0000143844" description="Uridylate kinase">
    <location>
        <begin position="2"/>
        <end position="241"/>
    </location>
</feature>
<feature type="region of interest" description="Involved in allosteric activation by GTP" evidence="2">
    <location>
        <begin position="23"/>
        <end position="28"/>
    </location>
</feature>
<feature type="binding site" evidence="2">
    <location>
        <begin position="15"/>
        <end position="18"/>
    </location>
    <ligand>
        <name>ATP</name>
        <dbReference type="ChEBI" id="CHEBI:30616"/>
    </ligand>
</feature>
<feature type="binding site" evidence="2">
    <location>
        <position position="57"/>
    </location>
    <ligand>
        <name>UMP</name>
        <dbReference type="ChEBI" id="CHEBI:57865"/>
    </ligand>
</feature>
<feature type="binding site" evidence="2">
    <location>
        <position position="58"/>
    </location>
    <ligand>
        <name>ATP</name>
        <dbReference type="ChEBI" id="CHEBI:30616"/>
    </ligand>
</feature>
<feature type="binding site" evidence="2">
    <location>
        <position position="62"/>
    </location>
    <ligand>
        <name>ATP</name>
        <dbReference type="ChEBI" id="CHEBI:30616"/>
    </ligand>
</feature>
<feature type="binding site" evidence="2">
    <location>
        <position position="77"/>
    </location>
    <ligand>
        <name>UMP</name>
        <dbReference type="ChEBI" id="CHEBI:57865"/>
    </ligand>
</feature>
<feature type="binding site" evidence="2">
    <location>
        <begin position="138"/>
        <end position="145"/>
    </location>
    <ligand>
        <name>UMP</name>
        <dbReference type="ChEBI" id="CHEBI:57865"/>
    </ligand>
</feature>
<feature type="binding site" evidence="2">
    <location>
        <position position="165"/>
    </location>
    <ligand>
        <name>ATP</name>
        <dbReference type="ChEBI" id="CHEBI:30616"/>
    </ligand>
</feature>
<feature type="binding site" evidence="2">
    <location>
        <position position="171"/>
    </location>
    <ligand>
        <name>ATP</name>
        <dbReference type="ChEBI" id="CHEBI:30616"/>
    </ligand>
</feature>
<feature type="binding site" evidence="2">
    <location>
        <position position="174"/>
    </location>
    <ligand>
        <name>ATP</name>
        <dbReference type="ChEBI" id="CHEBI:30616"/>
    </ligand>
</feature>
<name>PYRH_ECOL6</name>
<dbReference type="EC" id="2.7.4.22" evidence="2"/>
<dbReference type="EMBL" id="AE014075">
    <property type="protein sequence ID" value="AAN78701.1"/>
    <property type="molecule type" value="Genomic_DNA"/>
</dbReference>
<dbReference type="RefSeq" id="WP_000224573.1">
    <property type="nucleotide sequence ID" value="NZ_CP051263.1"/>
</dbReference>
<dbReference type="SMR" id="P0A7F0"/>
<dbReference type="STRING" id="199310.c0207"/>
<dbReference type="GeneID" id="93777254"/>
<dbReference type="KEGG" id="ecc:c0207"/>
<dbReference type="eggNOG" id="COG0528">
    <property type="taxonomic scope" value="Bacteria"/>
</dbReference>
<dbReference type="HOGENOM" id="CLU_033861_0_0_6"/>
<dbReference type="BioCyc" id="ECOL199310:C0207-MONOMER"/>
<dbReference type="UniPathway" id="UPA00159">
    <property type="reaction ID" value="UER00275"/>
</dbReference>
<dbReference type="Proteomes" id="UP000001410">
    <property type="component" value="Chromosome"/>
</dbReference>
<dbReference type="GO" id="GO:0005829">
    <property type="term" value="C:cytosol"/>
    <property type="evidence" value="ECO:0007669"/>
    <property type="project" value="TreeGrafter"/>
</dbReference>
<dbReference type="GO" id="GO:0005524">
    <property type="term" value="F:ATP binding"/>
    <property type="evidence" value="ECO:0007669"/>
    <property type="project" value="UniProtKB-KW"/>
</dbReference>
<dbReference type="GO" id="GO:0033862">
    <property type="term" value="F:UMP kinase activity"/>
    <property type="evidence" value="ECO:0007669"/>
    <property type="project" value="UniProtKB-EC"/>
</dbReference>
<dbReference type="GO" id="GO:0044210">
    <property type="term" value="P:'de novo' CTP biosynthetic process"/>
    <property type="evidence" value="ECO:0007669"/>
    <property type="project" value="UniProtKB-UniRule"/>
</dbReference>
<dbReference type="GO" id="GO:0006225">
    <property type="term" value="P:UDP biosynthetic process"/>
    <property type="evidence" value="ECO:0007669"/>
    <property type="project" value="TreeGrafter"/>
</dbReference>
<dbReference type="CDD" id="cd04254">
    <property type="entry name" value="AAK_UMPK-PyrH-Ec"/>
    <property type="match status" value="1"/>
</dbReference>
<dbReference type="FunFam" id="3.40.1160.10:FF:000001">
    <property type="entry name" value="Uridylate kinase"/>
    <property type="match status" value="1"/>
</dbReference>
<dbReference type="Gene3D" id="3.40.1160.10">
    <property type="entry name" value="Acetylglutamate kinase-like"/>
    <property type="match status" value="1"/>
</dbReference>
<dbReference type="HAMAP" id="MF_01220_B">
    <property type="entry name" value="PyrH_B"/>
    <property type="match status" value="1"/>
</dbReference>
<dbReference type="InterPro" id="IPR036393">
    <property type="entry name" value="AceGlu_kinase-like_sf"/>
</dbReference>
<dbReference type="InterPro" id="IPR001048">
    <property type="entry name" value="Asp/Glu/Uridylate_kinase"/>
</dbReference>
<dbReference type="InterPro" id="IPR011817">
    <property type="entry name" value="Uridylate_kinase"/>
</dbReference>
<dbReference type="InterPro" id="IPR015963">
    <property type="entry name" value="Uridylate_kinase_bac"/>
</dbReference>
<dbReference type="NCBIfam" id="TIGR02075">
    <property type="entry name" value="pyrH_bact"/>
    <property type="match status" value="1"/>
</dbReference>
<dbReference type="PANTHER" id="PTHR42833">
    <property type="entry name" value="URIDYLATE KINASE"/>
    <property type="match status" value="1"/>
</dbReference>
<dbReference type="PANTHER" id="PTHR42833:SF4">
    <property type="entry name" value="URIDYLATE KINASE PUMPKIN, CHLOROPLASTIC"/>
    <property type="match status" value="1"/>
</dbReference>
<dbReference type="Pfam" id="PF00696">
    <property type="entry name" value="AA_kinase"/>
    <property type="match status" value="1"/>
</dbReference>
<dbReference type="PIRSF" id="PIRSF005650">
    <property type="entry name" value="Uridylate_kin"/>
    <property type="match status" value="1"/>
</dbReference>
<dbReference type="SUPFAM" id="SSF53633">
    <property type="entry name" value="Carbamate kinase-like"/>
    <property type="match status" value="1"/>
</dbReference>
<keyword id="KW-0021">Allosteric enzyme</keyword>
<keyword id="KW-0067">ATP-binding</keyword>
<keyword id="KW-0963">Cytoplasm</keyword>
<keyword id="KW-0418">Kinase</keyword>
<keyword id="KW-0547">Nucleotide-binding</keyword>
<keyword id="KW-0665">Pyrimidine biosynthesis</keyword>
<keyword id="KW-1185">Reference proteome</keyword>
<keyword id="KW-0808">Transferase</keyword>
<proteinExistence type="inferred from homology"/>
<sequence>MATNAKPVYKRILLKLSGEALQGTEGFGIDASILDRMAQEIKELVELGIQVGVVIGGGNLFRGAGLAKAGMNRVVGDHMGMLATVMNGLAMRDALHRAYVNARLMSAIPLNGVCDSYSWAEAISLLRNNRVVILSAGTGNPFFTTDSAACLRGIEIEADVVLKATKVDGVFTADPAKDPTATMYEQLTYSEVLEKELKVMDLAAFTLARDHKLPIRVFNMNKPGALRRVVMGEKEGTLITE</sequence>
<evidence type="ECO:0000250" key="1"/>
<evidence type="ECO:0000255" key="2">
    <source>
        <dbReference type="HAMAP-Rule" id="MF_01220"/>
    </source>
</evidence>